<proteinExistence type="evidence at protein level"/>
<accession>Q9LND0</accession>
<comment type="subunit">
    <text evidence="4">Homodimer.</text>
</comment>
<comment type="interaction">
    <interactant intactId="EBI-25523114">
        <id>Q9LND0</id>
    </interactant>
    <interactant intactId="EBI-15200192">
        <id>O49608</id>
        <label>MYB32</label>
    </interactant>
    <organismsDiffer>false</organismsDiffer>
    <experiments>3</experiments>
</comment>
<comment type="subcellular location">
    <subcellularLocation>
        <location evidence="1">Nucleus</location>
    </subcellularLocation>
</comment>
<comment type="tissue specificity">
    <text evidence="3">Flowers.</text>
</comment>
<protein>
    <recommendedName>
        <fullName>Transcription factor bHLH89</fullName>
    </recommendedName>
    <alternativeName>
        <fullName>Basic helix-loop-helix protein 89</fullName>
        <shortName>AtbHLH89</shortName>
        <shortName>bHLH 89</shortName>
    </alternativeName>
    <alternativeName>
        <fullName>Transcription factor EN 24</fullName>
    </alternativeName>
    <alternativeName>
        <fullName>bHLH transcription factor bHLH089</fullName>
    </alternativeName>
</protein>
<name>BH089_ARATH</name>
<reference key="1">
    <citation type="journal article" date="2003" name="Mol. Biol. Evol.">
        <title>The basic helix-loop-helix transcription factor family in plants: a genome-wide study of protein structure and functional diversity.</title>
        <authorList>
            <person name="Heim M.A."/>
            <person name="Jakoby M."/>
            <person name="Werber M."/>
            <person name="Martin C."/>
            <person name="Weisshaar B."/>
            <person name="Bailey P.C."/>
        </authorList>
    </citation>
    <scope>NUCLEOTIDE SEQUENCE [MRNA]</scope>
    <scope>TISSUE SPECIFICITY</scope>
    <scope>GENE FAMILY</scope>
    <scope>NOMENCLATURE</scope>
    <source>
        <strain>cv. Columbia</strain>
        <tissue>Flower</tissue>
    </source>
</reference>
<reference key="2">
    <citation type="journal article" date="2000" name="Nature">
        <title>Sequence and analysis of chromosome 1 of the plant Arabidopsis thaliana.</title>
        <authorList>
            <person name="Theologis A."/>
            <person name="Ecker J.R."/>
            <person name="Palm C.J."/>
            <person name="Federspiel N.A."/>
            <person name="Kaul S."/>
            <person name="White O."/>
            <person name="Alonso J."/>
            <person name="Altafi H."/>
            <person name="Araujo R."/>
            <person name="Bowman C.L."/>
            <person name="Brooks S.Y."/>
            <person name="Buehler E."/>
            <person name="Chan A."/>
            <person name="Chao Q."/>
            <person name="Chen H."/>
            <person name="Cheuk R.F."/>
            <person name="Chin C.W."/>
            <person name="Chung M.K."/>
            <person name="Conn L."/>
            <person name="Conway A.B."/>
            <person name="Conway A.R."/>
            <person name="Creasy T.H."/>
            <person name="Dewar K."/>
            <person name="Dunn P."/>
            <person name="Etgu P."/>
            <person name="Feldblyum T.V."/>
            <person name="Feng J.-D."/>
            <person name="Fong B."/>
            <person name="Fujii C.Y."/>
            <person name="Gill J.E."/>
            <person name="Goldsmith A.D."/>
            <person name="Haas B."/>
            <person name="Hansen N.F."/>
            <person name="Hughes B."/>
            <person name="Huizar L."/>
            <person name="Hunter J.L."/>
            <person name="Jenkins J."/>
            <person name="Johnson-Hopson C."/>
            <person name="Khan S."/>
            <person name="Khaykin E."/>
            <person name="Kim C.J."/>
            <person name="Koo H.L."/>
            <person name="Kremenetskaia I."/>
            <person name="Kurtz D.B."/>
            <person name="Kwan A."/>
            <person name="Lam B."/>
            <person name="Langin-Hooper S."/>
            <person name="Lee A."/>
            <person name="Lee J.M."/>
            <person name="Lenz C.A."/>
            <person name="Li J.H."/>
            <person name="Li Y.-P."/>
            <person name="Lin X."/>
            <person name="Liu S.X."/>
            <person name="Liu Z.A."/>
            <person name="Luros J.S."/>
            <person name="Maiti R."/>
            <person name="Marziali A."/>
            <person name="Militscher J."/>
            <person name="Miranda M."/>
            <person name="Nguyen M."/>
            <person name="Nierman W.C."/>
            <person name="Osborne B.I."/>
            <person name="Pai G."/>
            <person name="Peterson J."/>
            <person name="Pham P.K."/>
            <person name="Rizzo M."/>
            <person name="Rooney T."/>
            <person name="Rowley D."/>
            <person name="Sakano H."/>
            <person name="Salzberg S.L."/>
            <person name="Schwartz J.R."/>
            <person name="Shinn P."/>
            <person name="Southwick A.M."/>
            <person name="Sun H."/>
            <person name="Tallon L.J."/>
            <person name="Tambunga G."/>
            <person name="Toriumi M.J."/>
            <person name="Town C.D."/>
            <person name="Utterback T."/>
            <person name="Van Aken S."/>
            <person name="Vaysberg M."/>
            <person name="Vysotskaia V.S."/>
            <person name="Walker M."/>
            <person name="Wu D."/>
            <person name="Yu G."/>
            <person name="Fraser C.M."/>
            <person name="Venter J.C."/>
            <person name="Davis R.W."/>
        </authorList>
    </citation>
    <scope>NUCLEOTIDE SEQUENCE [LARGE SCALE GENOMIC DNA]</scope>
    <source>
        <strain>cv. Columbia</strain>
    </source>
</reference>
<reference key="3">
    <citation type="journal article" date="2017" name="Plant J.">
        <title>Araport11: a complete reannotation of the Arabidopsis thaliana reference genome.</title>
        <authorList>
            <person name="Cheng C.Y."/>
            <person name="Krishnakumar V."/>
            <person name="Chan A.P."/>
            <person name="Thibaud-Nissen F."/>
            <person name="Schobel S."/>
            <person name="Town C.D."/>
        </authorList>
    </citation>
    <scope>GENOME REANNOTATION</scope>
    <source>
        <strain>cv. Columbia</strain>
    </source>
</reference>
<reference key="4">
    <citation type="journal article" date="2003" name="Science">
        <title>Empirical analysis of transcriptional activity in the Arabidopsis genome.</title>
        <authorList>
            <person name="Yamada K."/>
            <person name="Lim J."/>
            <person name="Dale J.M."/>
            <person name="Chen H."/>
            <person name="Shinn P."/>
            <person name="Palm C.J."/>
            <person name="Southwick A.M."/>
            <person name="Wu H.C."/>
            <person name="Kim C.J."/>
            <person name="Nguyen M."/>
            <person name="Pham P.K."/>
            <person name="Cheuk R.F."/>
            <person name="Karlin-Newmann G."/>
            <person name="Liu S.X."/>
            <person name="Lam B."/>
            <person name="Sakano H."/>
            <person name="Wu T."/>
            <person name="Yu G."/>
            <person name="Miranda M."/>
            <person name="Quach H.L."/>
            <person name="Tripp M."/>
            <person name="Chang C.H."/>
            <person name="Lee J.M."/>
            <person name="Toriumi M.J."/>
            <person name="Chan M.M."/>
            <person name="Tang C.C."/>
            <person name="Onodera C.S."/>
            <person name="Deng J.M."/>
            <person name="Akiyama K."/>
            <person name="Ansari Y."/>
            <person name="Arakawa T."/>
            <person name="Banh J."/>
            <person name="Banno F."/>
            <person name="Bowser L."/>
            <person name="Brooks S.Y."/>
            <person name="Carninci P."/>
            <person name="Chao Q."/>
            <person name="Choy N."/>
            <person name="Enju A."/>
            <person name="Goldsmith A.D."/>
            <person name="Gurjal M."/>
            <person name="Hansen N.F."/>
            <person name="Hayashizaki Y."/>
            <person name="Johnson-Hopson C."/>
            <person name="Hsuan V.W."/>
            <person name="Iida K."/>
            <person name="Karnes M."/>
            <person name="Khan S."/>
            <person name="Koesema E."/>
            <person name="Ishida J."/>
            <person name="Jiang P.X."/>
            <person name="Jones T."/>
            <person name="Kawai J."/>
            <person name="Kamiya A."/>
            <person name="Meyers C."/>
            <person name="Nakajima M."/>
            <person name="Narusaka M."/>
            <person name="Seki M."/>
            <person name="Sakurai T."/>
            <person name="Satou M."/>
            <person name="Tamse R."/>
            <person name="Vaysberg M."/>
            <person name="Wallender E.K."/>
            <person name="Wong C."/>
            <person name="Yamamura Y."/>
            <person name="Yuan S."/>
            <person name="Shinozaki K."/>
            <person name="Davis R.W."/>
            <person name="Theologis A."/>
            <person name="Ecker J.R."/>
        </authorList>
    </citation>
    <scope>NUCLEOTIDE SEQUENCE [LARGE SCALE MRNA]</scope>
    <source>
        <strain>cv. Columbia</strain>
    </source>
</reference>
<reference key="5">
    <citation type="journal article" date="2003" name="Plant Cell">
        <title>The Arabidopsis basic/helix-loop-helix transcription factor family.</title>
        <authorList>
            <person name="Toledo-Ortiz G."/>
            <person name="Huq E."/>
            <person name="Quail P.H."/>
        </authorList>
    </citation>
    <scope>GENE FAMILY</scope>
</reference>
<reference key="6">
    <citation type="journal article" date="2003" name="Plant Cell">
        <title>Update on the basic helix-loop-helix transcription factor gene family in Arabidopsis thaliana.</title>
        <authorList>
            <person name="Bailey P.C."/>
            <person name="Martin C."/>
            <person name="Toledo-Ortiz G."/>
            <person name="Quail P.H."/>
            <person name="Huq E."/>
            <person name="Heim M.A."/>
            <person name="Jakoby M."/>
            <person name="Werber M."/>
            <person name="Weisshaar B."/>
        </authorList>
    </citation>
    <scope>GENE FAMILY</scope>
    <scope>NOMENCLATURE</scope>
</reference>
<keyword id="KW-0238">DNA-binding</keyword>
<keyword id="KW-0539">Nucleus</keyword>
<keyword id="KW-1185">Reference proteome</keyword>
<keyword id="KW-0804">Transcription</keyword>
<keyword id="KW-0805">Transcription regulation</keyword>
<gene>
    <name type="primary">BHLH89</name>
    <name type="synonym">EN24</name>
    <name type="ordered locus">At1g06170</name>
    <name type="ORF">F9P14.3</name>
</gene>
<feature type="chain" id="PRO_0000358780" description="Transcription factor bHLH89">
    <location>
        <begin position="1"/>
        <end position="420"/>
    </location>
</feature>
<feature type="domain" description="bHLH" evidence="1">
    <location>
        <begin position="212"/>
        <end position="261"/>
    </location>
</feature>
<feature type="region of interest" description="Disordered" evidence="2">
    <location>
        <begin position="196"/>
        <end position="216"/>
    </location>
</feature>
<feature type="compositionally biased region" description="Basic residues" evidence="2">
    <location>
        <begin position="207"/>
        <end position="216"/>
    </location>
</feature>
<evidence type="ECO:0000255" key="1">
    <source>
        <dbReference type="PROSITE-ProRule" id="PRU00981"/>
    </source>
</evidence>
<evidence type="ECO:0000256" key="2">
    <source>
        <dbReference type="SAM" id="MobiDB-lite"/>
    </source>
</evidence>
<evidence type="ECO:0000269" key="3">
    <source>
    </source>
</evidence>
<evidence type="ECO:0000305" key="4"/>
<sequence length="420" mass="47033">MGGGGMFEEIGCFDPNAPAEMTAESSFSPSEPPPTITVIGSNSNSNCSLEDLSAFHLSPQDSSLPASASAYAHQLHINATPNCDHQFQSSMHQTLQDPSYAQQSNHWDNGYQDFVNLGPNHTTPDLLSLLQLPRSSLPPFANPSIQDIIMTTSSSVAAYDPLFHLNFPLQPPNGSFMGVDQDQTETNQGVNLMYDEENNNLDDGLNRKGRGSKKRKIFPTERERRVHFKDRFGDLKNLIPNPTKNDRASIVGEAIDYIKELLRTIDEFKLLVEKKRVKQRNREGDDVVDENFKAQSEVVEQCLINKKNNALRCSWLKRKSKFTDVDVRIIDDEVTIKIVQKKKINCLLFVSKVVDQLELDLHHVAGAQIGEHHSFLFNAKISEGSSVYASAIADRVMEVLKKQYMEALSANNGYHCYSSD</sequence>
<organism>
    <name type="scientific">Arabidopsis thaliana</name>
    <name type="common">Mouse-ear cress</name>
    <dbReference type="NCBI Taxonomy" id="3702"/>
    <lineage>
        <taxon>Eukaryota</taxon>
        <taxon>Viridiplantae</taxon>
        <taxon>Streptophyta</taxon>
        <taxon>Embryophyta</taxon>
        <taxon>Tracheophyta</taxon>
        <taxon>Spermatophyta</taxon>
        <taxon>Magnoliopsida</taxon>
        <taxon>eudicotyledons</taxon>
        <taxon>Gunneridae</taxon>
        <taxon>Pentapetalae</taxon>
        <taxon>rosids</taxon>
        <taxon>malvids</taxon>
        <taxon>Brassicales</taxon>
        <taxon>Brassicaceae</taxon>
        <taxon>Camelineae</taxon>
        <taxon>Arabidopsis</taxon>
    </lineage>
</organism>
<dbReference type="EMBL" id="AF488619">
    <property type="protein sequence ID" value="AAM10962.1"/>
    <property type="molecule type" value="mRNA"/>
</dbReference>
<dbReference type="EMBL" id="AC025290">
    <property type="protein sequence ID" value="AAF80214.1"/>
    <property type="molecule type" value="Genomic_DNA"/>
</dbReference>
<dbReference type="EMBL" id="CP002684">
    <property type="protein sequence ID" value="AEE27953.1"/>
    <property type="molecule type" value="Genomic_DNA"/>
</dbReference>
<dbReference type="EMBL" id="CP002684">
    <property type="protein sequence ID" value="AEE27954.1"/>
    <property type="molecule type" value="Genomic_DNA"/>
</dbReference>
<dbReference type="EMBL" id="BT004262">
    <property type="protein sequence ID" value="AAO42264.1"/>
    <property type="molecule type" value="mRNA"/>
</dbReference>
<dbReference type="PIR" id="C86197">
    <property type="entry name" value="C86197"/>
</dbReference>
<dbReference type="RefSeq" id="NP_172107.1">
    <property type="nucleotide sequence ID" value="NM_100498.4"/>
</dbReference>
<dbReference type="RefSeq" id="NP_973769.1">
    <property type="nucleotide sequence ID" value="NM_202040.1"/>
</dbReference>
<dbReference type="SMR" id="Q9LND0"/>
<dbReference type="BioGRID" id="22368">
    <property type="interactions" value="6"/>
</dbReference>
<dbReference type="FunCoup" id="Q9LND0">
    <property type="interactions" value="116"/>
</dbReference>
<dbReference type="IntAct" id="Q9LND0">
    <property type="interactions" value="2"/>
</dbReference>
<dbReference type="STRING" id="3702.Q9LND0"/>
<dbReference type="PaxDb" id="3702-AT1G06170.2"/>
<dbReference type="EnsemblPlants" id="AT1G06170.1">
    <property type="protein sequence ID" value="AT1G06170.1"/>
    <property type="gene ID" value="AT1G06170"/>
</dbReference>
<dbReference type="EnsemblPlants" id="AT1G06170.2">
    <property type="protein sequence ID" value="AT1G06170.2"/>
    <property type="gene ID" value="AT1G06170"/>
</dbReference>
<dbReference type="GeneID" id="837126"/>
<dbReference type="Gramene" id="AT1G06170.1">
    <property type="protein sequence ID" value="AT1G06170.1"/>
    <property type="gene ID" value="AT1G06170"/>
</dbReference>
<dbReference type="Gramene" id="AT1G06170.2">
    <property type="protein sequence ID" value="AT1G06170.2"/>
    <property type="gene ID" value="AT1G06170"/>
</dbReference>
<dbReference type="KEGG" id="ath:AT1G06170"/>
<dbReference type="Araport" id="AT1G06170"/>
<dbReference type="TAIR" id="AT1G06170">
    <property type="gene designation" value="BHLH089"/>
</dbReference>
<dbReference type="eggNOG" id="ENOG502QQIQ">
    <property type="taxonomic scope" value="Eukaryota"/>
</dbReference>
<dbReference type="HOGENOM" id="CLU_045325_0_0_1"/>
<dbReference type="InParanoid" id="Q9LND0"/>
<dbReference type="OMA" id="CDHQFQS"/>
<dbReference type="PhylomeDB" id="Q9LND0"/>
<dbReference type="PRO" id="PR:Q9LND0"/>
<dbReference type="Proteomes" id="UP000006548">
    <property type="component" value="Chromosome 1"/>
</dbReference>
<dbReference type="ExpressionAtlas" id="Q9LND0">
    <property type="expression patterns" value="baseline and differential"/>
</dbReference>
<dbReference type="GO" id="GO:0005634">
    <property type="term" value="C:nucleus"/>
    <property type="evidence" value="ECO:0007669"/>
    <property type="project" value="UniProtKB-SubCell"/>
</dbReference>
<dbReference type="GO" id="GO:0003700">
    <property type="term" value="F:DNA-binding transcription factor activity"/>
    <property type="evidence" value="ECO:0000250"/>
    <property type="project" value="TAIR"/>
</dbReference>
<dbReference type="GO" id="GO:0070888">
    <property type="term" value="F:E-box binding"/>
    <property type="evidence" value="ECO:0000353"/>
    <property type="project" value="TAIR"/>
</dbReference>
<dbReference type="GO" id="GO:0046983">
    <property type="term" value="F:protein dimerization activity"/>
    <property type="evidence" value="ECO:0007669"/>
    <property type="project" value="InterPro"/>
</dbReference>
<dbReference type="GO" id="GO:0048658">
    <property type="term" value="P:anther wall tapetum development"/>
    <property type="evidence" value="ECO:0000316"/>
    <property type="project" value="TAIR"/>
</dbReference>
<dbReference type="GO" id="GO:0052543">
    <property type="term" value="P:callose deposition in cell wall"/>
    <property type="evidence" value="ECO:0000316"/>
    <property type="project" value="TAIR"/>
</dbReference>
<dbReference type="GO" id="GO:0009555">
    <property type="term" value="P:pollen development"/>
    <property type="evidence" value="ECO:0000316"/>
    <property type="project" value="TAIR"/>
</dbReference>
<dbReference type="GO" id="GO:0006355">
    <property type="term" value="P:regulation of DNA-templated transcription"/>
    <property type="evidence" value="ECO:0000270"/>
    <property type="project" value="TAIR"/>
</dbReference>
<dbReference type="CDD" id="cd18918">
    <property type="entry name" value="bHLH_AtMYC1_like"/>
    <property type="match status" value="1"/>
</dbReference>
<dbReference type="FunFam" id="4.10.280.10:FF:000118">
    <property type="entry name" value="Transcription factor bHLH10"/>
    <property type="match status" value="1"/>
</dbReference>
<dbReference type="Gene3D" id="4.10.280.10">
    <property type="entry name" value="Helix-loop-helix DNA-binding domain"/>
    <property type="match status" value="1"/>
</dbReference>
<dbReference type="InterPro" id="IPR045895">
    <property type="entry name" value="bHLH91-like"/>
</dbReference>
<dbReference type="InterPro" id="IPR011598">
    <property type="entry name" value="bHLH_dom"/>
</dbReference>
<dbReference type="InterPro" id="IPR036638">
    <property type="entry name" value="HLH_DNA-bd_sf"/>
</dbReference>
<dbReference type="InterPro" id="IPR045896">
    <property type="entry name" value="MYC1-like_bHLH"/>
</dbReference>
<dbReference type="PANTHER" id="PTHR46834:SF12">
    <property type="entry name" value="TRANSCRIPTION FACTOR BHLH89"/>
    <property type="match status" value="1"/>
</dbReference>
<dbReference type="PANTHER" id="PTHR46834">
    <property type="entry name" value="TRANSCRIPTION FACTOR BHLH91"/>
    <property type="match status" value="1"/>
</dbReference>
<dbReference type="Pfam" id="PF00010">
    <property type="entry name" value="HLH"/>
    <property type="match status" value="1"/>
</dbReference>
<dbReference type="SMART" id="SM00353">
    <property type="entry name" value="HLH"/>
    <property type="match status" value="1"/>
</dbReference>
<dbReference type="SUPFAM" id="SSF47459">
    <property type="entry name" value="HLH, helix-loop-helix DNA-binding domain"/>
    <property type="match status" value="1"/>
</dbReference>
<dbReference type="PROSITE" id="PS50888">
    <property type="entry name" value="BHLH"/>
    <property type="match status" value="1"/>
</dbReference>